<comment type="cofactor">
    <cofactor evidence="1">
        <name>FAD</name>
        <dbReference type="ChEBI" id="CHEBI:57692"/>
    </cofactor>
</comment>
<comment type="similarity">
    <text evidence="1">Belongs to the DadA oxidoreductase family.</text>
</comment>
<keyword id="KW-0274">FAD</keyword>
<keyword id="KW-0285">Flavoprotein</keyword>
<keyword id="KW-0560">Oxidoreductase</keyword>
<reference key="1">
    <citation type="journal article" date="1994" name="Biochemistry">
        <title>Complete chemical structure of photoactive yellow protein: novel thioester-linked 4-hydroxycinnamyl chromophore and photocycle chemistry.</title>
        <authorList>
            <person name="Baca M."/>
            <person name="Borgstahl G.E."/>
            <person name="Boissinot M."/>
            <person name="Burke P.M."/>
            <person name="Williams D.R."/>
            <person name="Slater K.A."/>
            <person name="Getzoff E.D."/>
        </authorList>
    </citation>
    <scope>NUCLEOTIDE SEQUENCE [GENOMIC DNA]</scope>
    <source>
        <strain>BN9626</strain>
    </source>
</reference>
<reference key="2">
    <citation type="journal article" date="1996" name="EMBO J.">
        <title>The xanthopsins: a new family of eubacterial blue-light photoreceptors.</title>
        <authorList>
            <person name="Kort R."/>
            <person name="Hoff W.D."/>
            <person name="van West M."/>
            <person name="Kroon A.R."/>
            <person name="Hoffer S.M."/>
            <person name="Vlieg K.H."/>
            <person name="Crielaard W."/>
            <person name="van Beeumen J.J."/>
            <person name="Hellingwerf K.J."/>
        </authorList>
    </citation>
    <scope>NUCLEOTIDE SEQUENCE [GENOMIC DNA] OF 201-220</scope>
    <source>
        <strain>BN9626</strain>
    </source>
</reference>
<name>YPY1_HALHA</name>
<protein>
    <recommendedName>
        <fullName>Uncharacterized oxidoreductase in pyp 5'region</fullName>
    </recommendedName>
    <alternativeName>
        <fullName>ORF1</fullName>
    </alternativeName>
</protein>
<evidence type="ECO:0000305" key="1"/>
<dbReference type="EMBL" id="U17017">
    <property type="protein sequence ID" value="AAA61734.1"/>
    <property type="molecule type" value="Genomic_DNA"/>
</dbReference>
<dbReference type="EMBL" id="X98887">
    <property type="protein sequence ID" value="CAA67390.1"/>
    <property type="molecule type" value="Genomic_DNA"/>
</dbReference>
<dbReference type="PIR" id="A55993">
    <property type="entry name" value="A55993"/>
</dbReference>
<dbReference type="SMR" id="P42515"/>
<dbReference type="GO" id="GO:0005737">
    <property type="term" value="C:cytoplasm"/>
    <property type="evidence" value="ECO:0007669"/>
    <property type="project" value="TreeGrafter"/>
</dbReference>
<dbReference type="GO" id="GO:0005886">
    <property type="term" value="C:plasma membrane"/>
    <property type="evidence" value="ECO:0007669"/>
    <property type="project" value="TreeGrafter"/>
</dbReference>
<dbReference type="GO" id="GO:0008718">
    <property type="term" value="F:D-amino-acid dehydrogenase activity"/>
    <property type="evidence" value="ECO:0007669"/>
    <property type="project" value="TreeGrafter"/>
</dbReference>
<dbReference type="GO" id="GO:0055130">
    <property type="term" value="P:D-alanine catabolic process"/>
    <property type="evidence" value="ECO:0007669"/>
    <property type="project" value="TreeGrafter"/>
</dbReference>
<dbReference type="Gene3D" id="3.30.9.10">
    <property type="entry name" value="D-Amino Acid Oxidase, subunit A, domain 2"/>
    <property type="match status" value="1"/>
</dbReference>
<dbReference type="Gene3D" id="3.50.50.60">
    <property type="entry name" value="FAD/NAD(P)-binding domain"/>
    <property type="match status" value="1"/>
</dbReference>
<dbReference type="InterPro" id="IPR006076">
    <property type="entry name" value="FAD-dep_OxRdtase"/>
</dbReference>
<dbReference type="InterPro" id="IPR036188">
    <property type="entry name" value="FAD/NAD-bd_sf"/>
</dbReference>
<dbReference type="PANTHER" id="PTHR13847:SF280">
    <property type="entry name" value="D-AMINO ACID DEHYDROGENASE"/>
    <property type="match status" value="1"/>
</dbReference>
<dbReference type="PANTHER" id="PTHR13847">
    <property type="entry name" value="SARCOSINE DEHYDROGENASE-RELATED"/>
    <property type="match status" value="1"/>
</dbReference>
<dbReference type="Pfam" id="PF01266">
    <property type="entry name" value="DAO"/>
    <property type="match status" value="1"/>
</dbReference>
<dbReference type="SUPFAM" id="SSF54373">
    <property type="entry name" value="FAD-linked reductases, C-terminal domain"/>
    <property type="match status" value="1"/>
</dbReference>
<dbReference type="SUPFAM" id="SSF51905">
    <property type="entry name" value="FAD/NAD(P)-binding domain"/>
    <property type="match status" value="1"/>
</dbReference>
<accession>P42515</accession>
<accession>Q47830</accession>
<feature type="chain" id="PRO_0000166165" description="Uncharacterized oxidoreductase in pyp 5'region">
    <location>
        <begin position="1" status="less than"/>
        <end position="220"/>
    </location>
</feature>
<feature type="sequence conflict" description="In Ref. 2; CAA67390." evidence="1" ref="2">
    <original>S</original>
    <variation>W</variation>
    <location>
        <position position="215"/>
    </location>
</feature>
<feature type="non-terminal residue">
    <location>
        <position position="1"/>
    </location>
</feature>
<organism>
    <name type="scientific">Halorhodospira halophila</name>
    <name type="common">Ectothiorhodospira halophila</name>
    <dbReference type="NCBI Taxonomy" id="1053"/>
    <lineage>
        <taxon>Bacteria</taxon>
        <taxon>Pseudomonadati</taxon>
        <taxon>Pseudomonadota</taxon>
        <taxon>Gammaproteobacteria</taxon>
        <taxon>Chromatiales</taxon>
        <taxon>Ectothiorhodospiraceae</taxon>
        <taxon>Halorhodospira</taxon>
    </lineage>
</organism>
<sequence>LQFTAALAQRLTAEGAELWLDTTARRLLGGPAGVEGVETSRGIIDADAVVVAAGSYSPALTRRFGLRLPIEPVKGYSVSIPLHGIEGAPGMSIIDDARKVVVTRLGEQLRIAGKAEITGFDLRLDERRWRAVREQGLSRFPRLAEQLADAPSQPWAGLRPMTCDGPPILGPTPISGLHLATGVGHLGWTFAAGSARLVADQLEERTCDLDPAPYSLQRYG</sequence>
<proteinExistence type="inferred from homology"/>